<keyword id="KW-0040">ANK repeat</keyword>
<keyword id="KW-1185">Reference proteome</keyword>
<keyword id="KW-0677">Repeat</keyword>
<gene>
    <name type="ordered locus">MIMI_R229</name>
</gene>
<name>YR229_MIMIV</name>
<sequence>MSQFNNTNIIENTPINKMHQKKSNILDIFTLDNIRTNHSSDKVFFKITSDKPLSTDKLGQHFDNTYHTGLNICSIPFETKGSCVDGGIYFTDKDNILKFLFYGIYLRKVDLPLDDPGFIMVKDPDSCASSVKWRASRVILGNRLNLRDISTFKYLMSLGVDINVDNDKPLRWAASRGYYGLVKFLLDNGANVHAYDDEAVQLASRNGYLNVVKILVEYGANVNANNDYAIQMACKYGYNEIVRFLVFNGANPMANRYYPIEIATEFGNKLIVRFLLHQDKSMVYKSYAMDIAVRNENWDLLNVLLLD</sequence>
<protein>
    <recommendedName>
        <fullName>Putative ankyrin repeat protein R229</fullName>
    </recommendedName>
</protein>
<organismHost>
    <name type="scientific">Acanthamoeba polyphaga</name>
    <name type="common">Amoeba</name>
    <dbReference type="NCBI Taxonomy" id="5757"/>
</organismHost>
<organism>
    <name type="scientific">Acanthamoeba polyphaga mimivirus</name>
    <name type="common">APMV</name>
    <dbReference type="NCBI Taxonomy" id="212035"/>
    <lineage>
        <taxon>Viruses</taxon>
        <taxon>Varidnaviria</taxon>
        <taxon>Bamfordvirae</taxon>
        <taxon>Nucleocytoviricota</taxon>
        <taxon>Megaviricetes</taxon>
        <taxon>Imitervirales</taxon>
        <taxon>Mimiviridae</taxon>
        <taxon>Megamimivirinae</taxon>
        <taxon>Mimivirus</taxon>
        <taxon>Mimivirus bradfordmassiliense</taxon>
    </lineage>
</organism>
<dbReference type="EMBL" id="AY653733">
    <property type="protein sequence ID" value="AAV50502.1"/>
    <property type="molecule type" value="Genomic_DNA"/>
</dbReference>
<dbReference type="SMR" id="Q5UQC4"/>
<dbReference type="KEGG" id="vg:9924836"/>
<dbReference type="OrthoDB" id="38654at10239"/>
<dbReference type="Proteomes" id="UP000001134">
    <property type="component" value="Genome"/>
</dbReference>
<dbReference type="Gene3D" id="1.25.40.20">
    <property type="entry name" value="Ankyrin repeat-containing domain"/>
    <property type="match status" value="1"/>
</dbReference>
<dbReference type="InterPro" id="IPR002110">
    <property type="entry name" value="Ankyrin_rpt"/>
</dbReference>
<dbReference type="InterPro" id="IPR036770">
    <property type="entry name" value="Ankyrin_rpt-contain_sf"/>
</dbReference>
<dbReference type="PANTHER" id="PTHR24126:SF14">
    <property type="entry name" value="ANK_REP_REGION DOMAIN-CONTAINING PROTEIN"/>
    <property type="match status" value="1"/>
</dbReference>
<dbReference type="PANTHER" id="PTHR24126">
    <property type="entry name" value="ANKYRIN REPEAT, PH AND SEC7 DOMAIN CONTAINING PROTEIN SECG-RELATED"/>
    <property type="match status" value="1"/>
</dbReference>
<dbReference type="Pfam" id="PF12796">
    <property type="entry name" value="Ank_2"/>
    <property type="match status" value="2"/>
</dbReference>
<dbReference type="SMART" id="SM00248">
    <property type="entry name" value="ANK"/>
    <property type="match status" value="4"/>
</dbReference>
<dbReference type="SUPFAM" id="SSF48403">
    <property type="entry name" value="Ankyrin repeat"/>
    <property type="match status" value="1"/>
</dbReference>
<dbReference type="PROSITE" id="PS50297">
    <property type="entry name" value="ANK_REP_REGION"/>
    <property type="match status" value="1"/>
</dbReference>
<dbReference type="PROSITE" id="PS50088">
    <property type="entry name" value="ANK_REPEAT"/>
    <property type="match status" value="2"/>
</dbReference>
<proteinExistence type="predicted"/>
<feature type="chain" id="PRO_0000067164" description="Putative ankyrin repeat protein R229">
    <location>
        <begin position="1"/>
        <end position="307"/>
    </location>
</feature>
<feature type="repeat" description="ANK 1">
    <location>
        <begin position="135"/>
        <end position="164"/>
    </location>
</feature>
<feature type="repeat" description="ANK 2">
    <location>
        <begin position="165"/>
        <end position="194"/>
    </location>
</feature>
<feature type="repeat" description="ANK 3">
    <location>
        <begin position="196"/>
        <end position="224"/>
    </location>
</feature>
<feature type="repeat" description="ANK 4">
    <location>
        <begin position="226"/>
        <end position="254"/>
    </location>
</feature>
<feature type="repeat" description="ANK 5">
    <location>
        <begin position="256"/>
        <end position="284"/>
    </location>
</feature>
<feature type="repeat" description="ANK 6">
    <location>
        <begin position="286"/>
        <end position="307"/>
    </location>
</feature>
<accession>Q5UQC4</accession>
<reference key="1">
    <citation type="journal article" date="2004" name="Science">
        <title>The 1.2-megabase genome sequence of Mimivirus.</title>
        <authorList>
            <person name="Raoult D."/>
            <person name="Audic S."/>
            <person name="Robert C."/>
            <person name="Abergel C."/>
            <person name="Renesto P."/>
            <person name="Ogata H."/>
            <person name="La Scola B."/>
            <person name="Susan M."/>
            <person name="Claverie J.-M."/>
        </authorList>
    </citation>
    <scope>NUCLEOTIDE SEQUENCE [LARGE SCALE GENOMIC DNA]</scope>
    <source>
        <strain>Rowbotham-Bradford</strain>
    </source>
</reference>